<feature type="chain" id="PRO_0000251139" description="ADP-ribosylation factor-like protein 13B">
    <location>
        <begin position="1"/>
        <end position="407"/>
    </location>
</feature>
<feature type="region of interest" description="Disordered" evidence="4">
    <location>
        <begin position="202"/>
        <end position="407"/>
    </location>
</feature>
<feature type="coiled-coil region" evidence="3">
    <location>
        <begin position="195"/>
        <end position="313"/>
    </location>
</feature>
<feature type="compositionally biased region" description="Basic and acidic residues" evidence="4">
    <location>
        <begin position="202"/>
        <end position="247"/>
    </location>
</feature>
<feature type="compositionally biased region" description="Basic and acidic residues" evidence="4">
    <location>
        <begin position="269"/>
        <end position="284"/>
    </location>
</feature>
<feature type="compositionally biased region" description="Polar residues" evidence="4">
    <location>
        <begin position="285"/>
        <end position="295"/>
    </location>
</feature>
<feature type="compositionally biased region" description="Acidic residues" evidence="4">
    <location>
        <begin position="298"/>
        <end position="309"/>
    </location>
</feature>
<feature type="compositionally biased region" description="Basic residues" evidence="4">
    <location>
        <begin position="327"/>
        <end position="339"/>
    </location>
</feature>
<feature type="compositionally biased region" description="Basic and acidic residues" evidence="4">
    <location>
        <begin position="340"/>
        <end position="349"/>
    </location>
</feature>
<feature type="compositionally biased region" description="Basic and acidic residues" evidence="4">
    <location>
        <begin position="371"/>
        <end position="384"/>
    </location>
</feature>
<feature type="compositionally biased region" description="Basic and acidic residues" evidence="4">
    <location>
        <begin position="398"/>
        <end position="407"/>
    </location>
</feature>
<feature type="binding site" evidence="1">
    <location>
        <begin position="28"/>
        <end position="35"/>
    </location>
    <ligand>
        <name>GTP</name>
        <dbReference type="ChEBI" id="CHEBI:37565"/>
    </ligand>
</feature>
<feature type="binding site" evidence="1">
    <location>
        <begin position="71"/>
        <end position="75"/>
    </location>
    <ligand>
        <name>GTP</name>
        <dbReference type="ChEBI" id="CHEBI:37565"/>
    </ligand>
</feature>
<feature type="binding site" evidence="1">
    <location>
        <begin position="130"/>
        <end position="133"/>
    </location>
    <ligand>
        <name>GTP</name>
        <dbReference type="ChEBI" id="CHEBI:37565"/>
    </ligand>
</feature>
<feature type="lipid moiety-binding region" description="S-palmitoyl cysteine" evidence="1">
    <location>
        <position position="8"/>
    </location>
</feature>
<feature type="lipid moiety-binding region" description="S-palmitoyl cysteine" evidence="1">
    <location>
        <position position="9"/>
    </location>
</feature>
<feature type="mutagenesis site" description="Abolishes ability to rescue a arl13b mutant when transfected, without affecting localization to cilium." evidence="7">
    <original>G</original>
    <variation>V</variation>
    <location>
        <position position="28"/>
    </location>
</feature>
<feature type="mutagenesis site" description="Abolishes ability to rescue a arl13b mutant when transfected, without affecting localization to cilium." evidence="7">
    <original>T</original>
    <variation>N</variation>
    <location>
        <position position="35"/>
    </location>
</feature>
<feature type="sequence conflict" description="In Ref. 2; AAH92689." evidence="8" ref="2">
    <original>G</original>
    <variation>E</variation>
    <location>
        <position position="43"/>
    </location>
</feature>
<evidence type="ECO:0000250" key="1"/>
<evidence type="ECO:0000250" key="2">
    <source>
        <dbReference type="UniProtKB" id="Q640N2"/>
    </source>
</evidence>
<evidence type="ECO:0000255" key="3"/>
<evidence type="ECO:0000256" key="4">
    <source>
        <dbReference type="SAM" id="MobiDB-lite"/>
    </source>
</evidence>
<evidence type="ECO:0000269" key="5">
    <source>
    </source>
</evidence>
<evidence type="ECO:0000269" key="6">
    <source>
    </source>
</evidence>
<evidence type="ECO:0000269" key="7">
    <source>
    </source>
</evidence>
<evidence type="ECO:0000305" key="8"/>
<accession>Q8JHI3</accession>
<accession>Q561Z5</accession>
<protein>
    <recommendedName>
        <fullName>ADP-ribosylation factor-like protein 13B</fullName>
    </recommendedName>
    <alternativeName>
        <fullName>ADP-ribosylation factor-like protein 2-like 1</fullName>
        <shortName>ARL2-like protein 1</shortName>
    </alternativeName>
    <alternativeName>
        <fullName>Protein scorpion</fullName>
    </alternativeName>
</protein>
<reference key="1">
    <citation type="journal article" date="2002" name="Nat. Genet.">
        <title>Insertional mutagenesis in zebrafish rapidly identifies genes essential for early vertebrate development.</title>
        <authorList>
            <person name="Golling G."/>
            <person name="Amsterdam A."/>
            <person name="Sun Z."/>
            <person name="Antonelli M."/>
            <person name="Maldonado E."/>
            <person name="Chen W."/>
            <person name="Burgess S."/>
            <person name="Haldi M."/>
            <person name="Artzt K."/>
            <person name="Farrington S."/>
            <person name="Lin S.-Y."/>
            <person name="Nissen R.M."/>
            <person name="Hopkins N."/>
        </authorList>
    </citation>
    <scope>NUCLEOTIDE SEQUENCE [LARGE SCALE MRNA]</scope>
    <scope>FUNCTION</scope>
    <source>
        <tissue>Embryo</tissue>
    </source>
</reference>
<reference key="2">
    <citation type="submission" date="2005-04" db="EMBL/GenBank/DDBJ databases">
        <authorList>
            <consortium name="NIH - Zebrafish Gene Collection (ZGC) project"/>
        </authorList>
    </citation>
    <scope>NUCLEOTIDE SEQUENCE [LARGE SCALE MRNA] OF 1-275</scope>
    <source>
        <tissue>Olfactory epithelium</tissue>
    </source>
</reference>
<reference key="3">
    <citation type="journal article" date="2004" name="Development">
        <title>A genetic screen in zebrafish identifies cilia genes as a principal cause of cystic kidney.</title>
        <authorList>
            <person name="Sun Z."/>
            <person name="Amsterdam A."/>
            <person name="Pazour G.J."/>
            <person name="Cole D.G."/>
            <person name="Miller M.S."/>
            <person name="Hopkins N."/>
        </authorList>
    </citation>
    <scope>FUNCTION</scope>
    <scope>DISRUPTION PHENOTYPE</scope>
</reference>
<reference key="4">
    <citation type="journal article" date="2009" name="Development">
        <title>Cilia localization is essential for in vivo functions of the Joubert syndrome protein Arl13b/Scorpion.</title>
        <authorList>
            <person name="Duldulao N.A."/>
            <person name="Lee S."/>
            <person name="Sun Z."/>
        </authorList>
    </citation>
    <scope>FUNCTION</scope>
    <scope>SUBCELLULAR LOCATION</scope>
    <scope>TISSUE SPECIFICITY</scope>
    <scope>DEVELOPMENTAL STAGE</scope>
    <scope>MUTAGENESIS OF GLY-28 AND THR-35</scope>
</reference>
<organism>
    <name type="scientific">Danio rerio</name>
    <name type="common">Zebrafish</name>
    <name type="synonym">Brachydanio rerio</name>
    <dbReference type="NCBI Taxonomy" id="7955"/>
    <lineage>
        <taxon>Eukaryota</taxon>
        <taxon>Metazoa</taxon>
        <taxon>Chordata</taxon>
        <taxon>Craniata</taxon>
        <taxon>Vertebrata</taxon>
        <taxon>Euteleostomi</taxon>
        <taxon>Actinopterygii</taxon>
        <taxon>Neopterygii</taxon>
        <taxon>Teleostei</taxon>
        <taxon>Ostariophysi</taxon>
        <taxon>Cypriniformes</taxon>
        <taxon>Danionidae</taxon>
        <taxon>Danioninae</taxon>
        <taxon>Danio</taxon>
    </lineage>
</organism>
<name>AR13B_DANRE</name>
<keyword id="KW-1003">Cell membrane</keyword>
<keyword id="KW-0966">Cell projection</keyword>
<keyword id="KW-0969">Cilium</keyword>
<keyword id="KW-0175">Coiled coil</keyword>
<keyword id="KW-0217">Developmental protein</keyword>
<keyword id="KW-0342">GTP-binding</keyword>
<keyword id="KW-0449">Lipoprotein</keyword>
<keyword id="KW-0472">Membrane</keyword>
<keyword id="KW-0547">Nucleotide-binding</keyword>
<keyword id="KW-0564">Palmitate</keyword>
<keyword id="KW-1185">Reference proteome</keyword>
<dbReference type="EMBL" id="AF506213">
    <property type="protein sequence ID" value="AAM34657.1"/>
    <property type="molecule type" value="mRNA"/>
</dbReference>
<dbReference type="EMBL" id="BC092689">
    <property type="protein sequence ID" value="AAH92689.1"/>
    <property type="status" value="ALT_SEQ"/>
    <property type="molecule type" value="mRNA"/>
</dbReference>
<dbReference type="RefSeq" id="NP_775379.1">
    <property type="nucleotide sequence ID" value="NM_173272.2"/>
</dbReference>
<dbReference type="SMR" id="Q8JHI3"/>
<dbReference type="FunCoup" id="Q8JHI3">
    <property type="interactions" value="865"/>
</dbReference>
<dbReference type="STRING" id="7955.ENSDARP00000092960"/>
<dbReference type="PaxDb" id="7955-ENSDARP00000092960"/>
<dbReference type="Ensembl" id="ENSDART00000102184">
    <property type="protein sequence ID" value="ENSDARP00000092960"/>
    <property type="gene ID" value="ENSDARG00000012763"/>
</dbReference>
<dbReference type="GeneID" id="286784"/>
<dbReference type="KEGG" id="dre:286784"/>
<dbReference type="AGR" id="ZFIN:ZDB-GENE-021217-3"/>
<dbReference type="CTD" id="200894"/>
<dbReference type="ZFIN" id="ZDB-GENE-021217-3">
    <property type="gene designation" value="arl13b"/>
</dbReference>
<dbReference type="eggNOG" id="KOG0074">
    <property type="taxonomic scope" value="Eukaryota"/>
</dbReference>
<dbReference type="eggNOG" id="KOG0076">
    <property type="taxonomic scope" value="Eukaryota"/>
</dbReference>
<dbReference type="HOGENOM" id="CLU_040729_3_0_1"/>
<dbReference type="InParanoid" id="Q8JHI3"/>
<dbReference type="OrthoDB" id="14717at2759"/>
<dbReference type="PhylomeDB" id="Q8JHI3"/>
<dbReference type="TreeFam" id="TF105476"/>
<dbReference type="Reactome" id="R-DRE-9013406">
    <property type="pathway name" value="RHOQ GTPase cycle"/>
</dbReference>
<dbReference type="Reactome" id="R-DRE-9646399">
    <property type="pathway name" value="Aggrephagy"/>
</dbReference>
<dbReference type="PRO" id="PR:Q8JHI3"/>
<dbReference type="Proteomes" id="UP000000437">
    <property type="component" value="Chromosome 1"/>
</dbReference>
<dbReference type="Bgee" id="ENSDARG00000012763">
    <property type="expression patterns" value="Expressed in testis and 28 other cell types or tissues"/>
</dbReference>
<dbReference type="ExpressionAtlas" id="Q8JHI3">
    <property type="expression patterns" value="baseline and differential"/>
</dbReference>
<dbReference type="GO" id="GO:0060170">
    <property type="term" value="C:ciliary membrane"/>
    <property type="evidence" value="ECO:0000250"/>
    <property type="project" value="UniProtKB"/>
</dbReference>
<dbReference type="GO" id="GO:0005929">
    <property type="term" value="C:cilium"/>
    <property type="evidence" value="ECO:0000314"/>
    <property type="project" value="ZFIN"/>
</dbReference>
<dbReference type="GO" id="GO:0031514">
    <property type="term" value="C:motile cilium"/>
    <property type="evidence" value="ECO:0000318"/>
    <property type="project" value="GO_Central"/>
</dbReference>
<dbReference type="GO" id="GO:0097730">
    <property type="term" value="C:non-motile cilium"/>
    <property type="evidence" value="ECO:0000318"/>
    <property type="project" value="GO_Central"/>
</dbReference>
<dbReference type="GO" id="GO:0005525">
    <property type="term" value="F:GTP binding"/>
    <property type="evidence" value="ECO:0007669"/>
    <property type="project" value="UniProtKB-KW"/>
</dbReference>
<dbReference type="GO" id="GO:0003924">
    <property type="term" value="F:GTPase activity"/>
    <property type="evidence" value="ECO:0007669"/>
    <property type="project" value="InterPro"/>
</dbReference>
<dbReference type="GO" id="GO:0060271">
    <property type="term" value="P:cilium assembly"/>
    <property type="evidence" value="ECO:0000315"/>
    <property type="project" value="ZFIN"/>
</dbReference>
<dbReference type="GO" id="GO:0021943">
    <property type="term" value="P:formation of radial glial scaffolds"/>
    <property type="evidence" value="ECO:0000250"/>
    <property type="project" value="UniProtKB"/>
</dbReference>
<dbReference type="GO" id="GO:0021830">
    <property type="term" value="P:interneuron migration from the subpallium to the cortex"/>
    <property type="evidence" value="ECO:0000250"/>
    <property type="project" value="UniProtKB"/>
</dbReference>
<dbReference type="GO" id="GO:0021532">
    <property type="term" value="P:neural tube patterning"/>
    <property type="evidence" value="ECO:0000250"/>
    <property type="project" value="UniProtKB"/>
</dbReference>
<dbReference type="GO" id="GO:1905515">
    <property type="term" value="P:non-motile cilium assembly"/>
    <property type="evidence" value="ECO:0000250"/>
    <property type="project" value="UniProtKB"/>
</dbReference>
<dbReference type="GO" id="GO:0035845">
    <property type="term" value="P:photoreceptor cell outer segment organization"/>
    <property type="evidence" value="ECO:0000315"/>
    <property type="project" value="ZFIN"/>
</dbReference>
<dbReference type="GO" id="GO:0097500">
    <property type="term" value="P:receptor localization to non-motile cilium"/>
    <property type="evidence" value="ECO:0000318"/>
    <property type="project" value="GO_Central"/>
</dbReference>
<dbReference type="GO" id="GO:0007224">
    <property type="term" value="P:smoothened signaling pathway"/>
    <property type="evidence" value="ECO:0000250"/>
    <property type="project" value="UniProtKB"/>
</dbReference>
<dbReference type="CDD" id="cd04161">
    <property type="entry name" value="Arl2l1_Arl13_like"/>
    <property type="match status" value="1"/>
</dbReference>
<dbReference type="FunFam" id="3.40.50.300:FF:000415">
    <property type="entry name" value="ADP-ribosylation factor-like GTPase 13B"/>
    <property type="match status" value="1"/>
</dbReference>
<dbReference type="Gene3D" id="3.40.50.300">
    <property type="entry name" value="P-loop containing nucleotide triphosphate hydrolases"/>
    <property type="match status" value="1"/>
</dbReference>
<dbReference type="InterPro" id="IPR051995">
    <property type="entry name" value="Ciliary_GTPase"/>
</dbReference>
<dbReference type="InterPro" id="IPR027417">
    <property type="entry name" value="P-loop_NTPase"/>
</dbReference>
<dbReference type="InterPro" id="IPR005225">
    <property type="entry name" value="Small_GTP-bd"/>
</dbReference>
<dbReference type="InterPro" id="IPR006689">
    <property type="entry name" value="Small_GTPase_ARF/SAR"/>
</dbReference>
<dbReference type="NCBIfam" id="TIGR00231">
    <property type="entry name" value="small_GTP"/>
    <property type="match status" value="1"/>
</dbReference>
<dbReference type="PANTHER" id="PTHR46090">
    <property type="entry name" value="ADP-RIBOSYLATION FACTOR-LIKE PROTEIN 13B"/>
    <property type="match status" value="1"/>
</dbReference>
<dbReference type="PANTHER" id="PTHR46090:SF3">
    <property type="entry name" value="ADP-RIBOSYLATION FACTOR-LIKE PROTEIN 13B"/>
    <property type="match status" value="1"/>
</dbReference>
<dbReference type="Pfam" id="PF00025">
    <property type="entry name" value="Arf"/>
    <property type="match status" value="1"/>
</dbReference>
<dbReference type="PRINTS" id="PR00328">
    <property type="entry name" value="SAR1GTPBP"/>
</dbReference>
<dbReference type="SMART" id="SM00177">
    <property type="entry name" value="ARF"/>
    <property type="match status" value="1"/>
</dbReference>
<dbReference type="SMART" id="SM00178">
    <property type="entry name" value="SAR"/>
    <property type="match status" value="1"/>
</dbReference>
<dbReference type="SUPFAM" id="SSF52540">
    <property type="entry name" value="P-loop containing nucleoside triphosphate hydrolases"/>
    <property type="match status" value="1"/>
</dbReference>
<dbReference type="PROSITE" id="PS51417">
    <property type="entry name" value="ARF"/>
    <property type="match status" value="1"/>
</dbReference>
<comment type="function">
    <text evidence="5 6 7">Cilium-specific protein required to control the microtubule-based, ciliary axoneme structure. May act by maintaining the association between IFT subcomplexes A and B. Binds GTP but is not able to hydrolyze it; the GTPase activity remains unclear. Required to pattern the neural tube. Involved in cerebral cortex development: required for the initial formation of a polarized radial glial scaffold, the first step in the construction of the cerebral cortex, by regulating ciliary signaling. Regulates the migration and placement of postmitotic interneurons in the developing cerebral cortex Required during embryogenesis for cilia formation in multiple organs such as the pronephric duct.</text>
</comment>
<comment type="subunit">
    <text evidence="2">Interacts with EXOC2; regulates ARL13B localization to the cilium membrane.</text>
</comment>
<comment type="subcellular location">
    <subcellularLocation>
        <location evidence="7">Cell projection</location>
        <location evidence="7">Cilium membrane</location>
        <topology evidence="7">Lipid-anchor</topology>
    </subcellularLocation>
    <text>Associates to the cilium membrane via palmitoylation. Localizes to proximal ciliary membranes, to an inversin-like subciliary membrane compartment, excluding the transition zone.</text>
</comment>
<comment type="tissue specificity">
    <text evidence="7">Cilium-specific.</text>
</comment>
<comment type="developmental stage">
    <text evidence="7">Detected at the 4- to 32-cell stage, suggesting it is expressed maternally.</text>
</comment>
<comment type="disruption phenotype">
    <text evidence="6">Embryos have a ventrally curved tail, ciliary defects and cystic kidneys.</text>
</comment>
<comment type="similarity">
    <text evidence="8">Belongs to the small GTPase superfamily. Arf family.</text>
</comment>
<comment type="sequence caution" evidence="8">
    <conflict type="miscellaneous discrepancy">
        <sequence resource="EMBL-CDS" id="AAH92689"/>
    </conflict>
    <text>Contaminating sequence. Potential poly-A sequence.</text>
</comment>
<gene>
    <name type="primary">arl13b</name>
    <name type="synonym">arl2l1</name>
</gene>
<sequence length="407" mass="46566">MFNLMANCCNWLKRWREPARKVTLVMVGLDNAGKTATVRGIQGESPLDVAPTVGFSKVDLKQGKFEVTIFDLGGGKRIRGIWKNYYSESYGVVFVVDSSDVQRIQETRDTMAEVLRHPRIAGKPVLVLANKQDQDGAMAEADIIETLSLEKLVNENKCLCQIEPCSAVLGYGKKVDKSIKNGLNWLLNNIAKDYEAISERVQKDTAEQKAQEEQDKKERAERVRRIREERDRQEREEAEREGRTLKEEELDDVNMFNPFQPINNVLTENQDRLNREKEMQRQRENGQQGSVQEQIALQDEEEEEEDEESERQTPESTESGAVDQTKKKTRKLRLKRKHRVDPLRMEEAAPKSPTPPPLPVGWATPKVSRLPKLEPLGDTRHSDFYGKPLPPVAIRQRPNSDTHDVIS</sequence>
<proteinExistence type="evidence at protein level"/>